<protein>
    <recommendedName>
        <fullName>Protein rep</fullName>
    </recommendedName>
    <alternativeName>
        <fullName>Replication protein</fullName>
    </alternativeName>
</protein>
<feature type="chain" id="PRO_0000068313" description="Protein rep">
    <location>
        <begin position="1"/>
        <end position="339"/>
    </location>
</feature>
<feature type="binding site" evidence="1">
    <location>
        <position position="251"/>
    </location>
    <ligand>
        <name>DNA</name>
        <dbReference type="ChEBI" id="CHEBI:16991"/>
    </ligand>
</feature>
<organism>
    <name type="scientific">Bacillus amyloliquefaciens</name>
    <name type="common">Bacillus velezensis</name>
    <dbReference type="NCBI Taxonomy" id="1390"/>
    <lineage>
        <taxon>Bacteria</taxon>
        <taxon>Bacillati</taxon>
        <taxon>Bacillota</taxon>
        <taxon>Bacilli</taxon>
        <taxon>Bacillales</taxon>
        <taxon>Bacillaceae</taxon>
        <taxon>Bacillus</taxon>
        <taxon>Bacillus amyloliquefaciens group</taxon>
    </lineage>
</organism>
<dbReference type="EMBL" id="X06242">
    <property type="protein sequence ID" value="CAA29586.1"/>
    <property type="molecule type" value="Genomic_DNA"/>
</dbReference>
<dbReference type="PIR" id="S01098">
    <property type="entry name" value="S01098"/>
</dbReference>
<dbReference type="RefSeq" id="WP_032488327.1">
    <property type="nucleotide sequence ID" value="NZ_CP090839.1"/>
</dbReference>
<dbReference type="GO" id="GO:0003677">
    <property type="term" value="F:DNA binding"/>
    <property type="evidence" value="ECO:0007669"/>
    <property type="project" value="InterPro"/>
</dbReference>
<dbReference type="GO" id="GO:0006260">
    <property type="term" value="P:DNA replication"/>
    <property type="evidence" value="ECO:0007669"/>
    <property type="project" value="UniProtKB-KW"/>
</dbReference>
<dbReference type="InterPro" id="IPR000989">
    <property type="entry name" value="Rep"/>
</dbReference>
<dbReference type="Pfam" id="PF01446">
    <property type="entry name" value="Rep_1"/>
    <property type="match status" value="1"/>
</dbReference>
<geneLocation type="plasmid">
    <name>pFTB14</name>
</geneLocation>
<name>REP_BACAM</name>
<sequence length="339" mass="39642">MYSSENDYSILEDKTATGKKRDWRGKKRRANLMAEHYEALEKRIGAPYYGKKAERLSECAEHLSFKRDPETGRLKLYQAHFCKVRLCPMCAWRRSLKIAYHNKLIIEEANRQYGCGWIFLTLTVRNVKGERLKPQISEMMEGFRKLFQYKKVKTSVLGFFRALEITKNHEEDTYHPHFHVLLPVKRNYFGKNYIKQAEWTSLWKRAMKLDYTPIVDIRRVKGRVKIDAEQIESDVREAMMEQKAVLEISKYPVKDTDVVRGSKVTDDNLNTVFYLDDALSARRLIGYGGILKEIHKELNLGDAEGGDLVKIEEEDDEVANGAFEVMAYWHPGIKNYILK</sequence>
<keyword id="KW-0235">DNA replication</keyword>
<keyword id="KW-0614">Plasmid</keyword>
<proteinExistence type="inferred from homology"/>
<accession>P13963</accession>
<comment type="similarity">
    <text evidence="2">Belongs to the Gram-positive plasmids replication protein type 1 family.</text>
</comment>
<gene>
    <name type="primary">rep</name>
</gene>
<reference key="1">
    <citation type="journal article" date="1987" name="Mol. Gen. Genet.">
        <title>Molecular structure of the replication origin of a Bacillus amyloliquefaciens plasmid pFTB14.</title>
        <authorList>
            <person name="Murai M."/>
            <person name="Miyashita H."/>
            <person name="Araki H."/>
            <person name="Seki T."/>
            <person name="Oshima Y."/>
        </authorList>
    </citation>
    <scope>NUCLEOTIDE SEQUENCE [GENOMIC DNA]</scope>
</reference>
<evidence type="ECO:0000250" key="1"/>
<evidence type="ECO:0000305" key="2"/>